<gene>
    <name evidence="1" type="primary">rpsI</name>
    <name type="ordered locus">BH07810</name>
</gene>
<sequence length="161" mass="17947">MAEINSLTELSVVTNTAETHENIAPVHVQKLDSQGRAYATGKRKDAVARVWIKPGSGKITINNKEFDKYFARPVLRMILRQPIVATNRDTQFDIIATVAGGGLSGQAGAVRHGISKALTYYEPELRTILKKGGFLTRDSRVVERKKYGKAKARRSFQFSKR</sequence>
<keyword id="KW-0687">Ribonucleoprotein</keyword>
<keyword id="KW-0689">Ribosomal protein</keyword>
<evidence type="ECO:0000255" key="1">
    <source>
        <dbReference type="HAMAP-Rule" id="MF_00532"/>
    </source>
</evidence>
<evidence type="ECO:0000305" key="2"/>
<reference key="1">
    <citation type="journal article" date="2004" name="Proc. Natl. Acad. Sci. U.S.A.">
        <title>The louse-borne human pathogen Bartonella quintana is a genomic derivative of the zoonotic agent Bartonella henselae.</title>
        <authorList>
            <person name="Alsmark U.C.M."/>
            <person name="Frank A.C."/>
            <person name="Karlberg E.O."/>
            <person name="Legault B.-A."/>
            <person name="Ardell D.H."/>
            <person name="Canbaeck B."/>
            <person name="Eriksson A.-S."/>
            <person name="Naeslund A.K."/>
            <person name="Handley S.A."/>
            <person name="Huvet M."/>
            <person name="La Scola B."/>
            <person name="Holmberg M."/>
            <person name="Andersson S.G.E."/>
        </authorList>
    </citation>
    <scope>NUCLEOTIDE SEQUENCE [LARGE SCALE GENOMIC DNA]</scope>
    <source>
        <strain>ATCC 49882 / DSM 28221 / CCUG 30454 / Houston 1</strain>
    </source>
</reference>
<dbReference type="EMBL" id="BX897699">
    <property type="protein sequence ID" value="CAF27581.1"/>
    <property type="molecule type" value="Genomic_DNA"/>
</dbReference>
<dbReference type="RefSeq" id="WP_011180682.1">
    <property type="nucleotide sequence ID" value="NZ_LRIJ02000001.1"/>
</dbReference>
<dbReference type="SMR" id="Q6G3I7"/>
<dbReference type="PaxDb" id="283166-BH07810"/>
<dbReference type="EnsemblBacteria" id="CAF27581">
    <property type="protein sequence ID" value="CAF27581"/>
    <property type="gene ID" value="BH07810"/>
</dbReference>
<dbReference type="GeneID" id="92985550"/>
<dbReference type="KEGG" id="bhe:BH07810"/>
<dbReference type="eggNOG" id="COG0103">
    <property type="taxonomic scope" value="Bacteria"/>
</dbReference>
<dbReference type="OrthoDB" id="9803965at2"/>
<dbReference type="Proteomes" id="UP000000421">
    <property type="component" value="Chromosome"/>
</dbReference>
<dbReference type="GO" id="GO:0022627">
    <property type="term" value="C:cytosolic small ribosomal subunit"/>
    <property type="evidence" value="ECO:0007669"/>
    <property type="project" value="TreeGrafter"/>
</dbReference>
<dbReference type="GO" id="GO:0003723">
    <property type="term" value="F:RNA binding"/>
    <property type="evidence" value="ECO:0007669"/>
    <property type="project" value="TreeGrafter"/>
</dbReference>
<dbReference type="GO" id="GO:0003735">
    <property type="term" value="F:structural constituent of ribosome"/>
    <property type="evidence" value="ECO:0007669"/>
    <property type="project" value="InterPro"/>
</dbReference>
<dbReference type="GO" id="GO:0006412">
    <property type="term" value="P:translation"/>
    <property type="evidence" value="ECO:0007669"/>
    <property type="project" value="UniProtKB-UniRule"/>
</dbReference>
<dbReference type="FunFam" id="3.30.230.10:FF:000034">
    <property type="entry name" value="30S ribosomal protein S9"/>
    <property type="match status" value="1"/>
</dbReference>
<dbReference type="Gene3D" id="3.30.230.10">
    <property type="match status" value="1"/>
</dbReference>
<dbReference type="HAMAP" id="MF_00532_B">
    <property type="entry name" value="Ribosomal_uS9_B"/>
    <property type="match status" value="1"/>
</dbReference>
<dbReference type="InterPro" id="IPR020568">
    <property type="entry name" value="Ribosomal_Su5_D2-typ_SF"/>
</dbReference>
<dbReference type="InterPro" id="IPR000754">
    <property type="entry name" value="Ribosomal_uS9"/>
</dbReference>
<dbReference type="InterPro" id="IPR023035">
    <property type="entry name" value="Ribosomal_uS9_bac/plastid"/>
</dbReference>
<dbReference type="InterPro" id="IPR020574">
    <property type="entry name" value="Ribosomal_uS9_CS"/>
</dbReference>
<dbReference type="InterPro" id="IPR014721">
    <property type="entry name" value="Ribsml_uS5_D2-typ_fold_subgr"/>
</dbReference>
<dbReference type="NCBIfam" id="NF001099">
    <property type="entry name" value="PRK00132.1"/>
    <property type="match status" value="1"/>
</dbReference>
<dbReference type="PANTHER" id="PTHR21569">
    <property type="entry name" value="RIBOSOMAL PROTEIN S9"/>
    <property type="match status" value="1"/>
</dbReference>
<dbReference type="PANTHER" id="PTHR21569:SF1">
    <property type="entry name" value="SMALL RIBOSOMAL SUBUNIT PROTEIN US9M"/>
    <property type="match status" value="1"/>
</dbReference>
<dbReference type="Pfam" id="PF00380">
    <property type="entry name" value="Ribosomal_S9"/>
    <property type="match status" value="1"/>
</dbReference>
<dbReference type="SUPFAM" id="SSF54211">
    <property type="entry name" value="Ribosomal protein S5 domain 2-like"/>
    <property type="match status" value="1"/>
</dbReference>
<dbReference type="PROSITE" id="PS00360">
    <property type="entry name" value="RIBOSOMAL_S9"/>
    <property type="match status" value="1"/>
</dbReference>
<accession>Q6G3I7</accession>
<proteinExistence type="inferred from homology"/>
<comment type="similarity">
    <text evidence="1">Belongs to the universal ribosomal protein uS9 family.</text>
</comment>
<protein>
    <recommendedName>
        <fullName evidence="1">Small ribosomal subunit protein uS9</fullName>
    </recommendedName>
    <alternativeName>
        <fullName evidence="2">30S ribosomal protein S9</fullName>
    </alternativeName>
</protein>
<organism>
    <name type="scientific">Bartonella henselae (strain ATCC 49882 / DSM 28221 / CCUG 30454 / Houston 1)</name>
    <name type="common">Rochalimaea henselae</name>
    <dbReference type="NCBI Taxonomy" id="283166"/>
    <lineage>
        <taxon>Bacteria</taxon>
        <taxon>Pseudomonadati</taxon>
        <taxon>Pseudomonadota</taxon>
        <taxon>Alphaproteobacteria</taxon>
        <taxon>Hyphomicrobiales</taxon>
        <taxon>Bartonellaceae</taxon>
        <taxon>Bartonella</taxon>
    </lineage>
</organism>
<name>RS9_BARHE</name>
<feature type="chain" id="PRO_1000051168" description="Small ribosomal subunit protein uS9">
    <location>
        <begin position="1"/>
        <end position="161"/>
    </location>
</feature>